<dbReference type="EC" id="2.4.2.18" evidence="1"/>
<dbReference type="EMBL" id="CP000024">
    <property type="protein sequence ID" value="AAV63121.1"/>
    <property type="molecule type" value="Genomic_DNA"/>
</dbReference>
<dbReference type="RefSeq" id="WP_011227479.1">
    <property type="nucleotide sequence ID" value="NC_006449.1"/>
</dbReference>
<dbReference type="SMR" id="Q5LYI4"/>
<dbReference type="KEGG" id="stc:str1591"/>
<dbReference type="HOGENOM" id="CLU_034315_2_1_9"/>
<dbReference type="UniPathway" id="UPA00035">
    <property type="reaction ID" value="UER00041"/>
</dbReference>
<dbReference type="GO" id="GO:0005829">
    <property type="term" value="C:cytosol"/>
    <property type="evidence" value="ECO:0007669"/>
    <property type="project" value="TreeGrafter"/>
</dbReference>
<dbReference type="GO" id="GO:0004048">
    <property type="term" value="F:anthranilate phosphoribosyltransferase activity"/>
    <property type="evidence" value="ECO:0007669"/>
    <property type="project" value="UniProtKB-UniRule"/>
</dbReference>
<dbReference type="GO" id="GO:0000287">
    <property type="term" value="F:magnesium ion binding"/>
    <property type="evidence" value="ECO:0007669"/>
    <property type="project" value="UniProtKB-UniRule"/>
</dbReference>
<dbReference type="GO" id="GO:0000162">
    <property type="term" value="P:L-tryptophan biosynthetic process"/>
    <property type="evidence" value="ECO:0007669"/>
    <property type="project" value="UniProtKB-UniRule"/>
</dbReference>
<dbReference type="FunFam" id="3.40.1030.10:FF:000002">
    <property type="entry name" value="Anthranilate phosphoribosyltransferase"/>
    <property type="match status" value="1"/>
</dbReference>
<dbReference type="Gene3D" id="3.40.1030.10">
    <property type="entry name" value="Nucleoside phosphorylase/phosphoribosyltransferase catalytic domain"/>
    <property type="match status" value="1"/>
</dbReference>
<dbReference type="Gene3D" id="1.20.970.10">
    <property type="entry name" value="Transferase, Pyrimidine Nucleoside Phosphorylase, Chain C"/>
    <property type="match status" value="1"/>
</dbReference>
<dbReference type="HAMAP" id="MF_00211">
    <property type="entry name" value="TrpD"/>
    <property type="match status" value="1"/>
</dbReference>
<dbReference type="InterPro" id="IPR005940">
    <property type="entry name" value="Anthranilate_Pribosyl_Tfrase"/>
</dbReference>
<dbReference type="InterPro" id="IPR000312">
    <property type="entry name" value="Glycosyl_Trfase_fam3"/>
</dbReference>
<dbReference type="InterPro" id="IPR017459">
    <property type="entry name" value="Glycosyl_Trfase_fam3_N_dom"/>
</dbReference>
<dbReference type="InterPro" id="IPR036320">
    <property type="entry name" value="Glycosyl_Trfase_fam3_N_dom_sf"/>
</dbReference>
<dbReference type="InterPro" id="IPR035902">
    <property type="entry name" value="Nuc_phospho_transferase"/>
</dbReference>
<dbReference type="NCBIfam" id="TIGR01245">
    <property type="entry name" value="trpD"/>
    <property type="match status" value="1"/>
</dbReference>
<dbReference type="PANTHER" id="PTHR43285">
    <property type="entry name" value="ANTHRANILATE PHOSPHORIBOSYLTRANSFERASE"/>
    <property type="match status" value="1"/>
</dbReference>
<dbReference type="PANTHER" id="PTHR43285:SF2">
    <property type="entry name" value="ANTHRANILATE PHOSPHORIBOSYLTRANSFERASE"/>
    <property type="match status" value="1"/>
</dbReference>
<dbReference type="Pfam" id="PF02885">
    <property type="entry name" value="Glycos_trans_3N"/>
    <property type="match status" value="1"/>
</dbReference>
<dbReference type="Pfam" id="PF00591">
    <property type="entry name" value="Glycos_transf_3"/>
    <property type="match status" value="1"/>
</dbReference>
<dbReference type="SUPFAM" id="SSF52418">
    <property type="entry name" value="Nucleoside phosphorylase/phosphoribosyltransferase catalytic domain"/>
    <property type="match status" value="1"/>
</dbReference>
<dbReference type="SUPFAM" id="SSF47648">
    <property type="entry name" value="Nucleoside phosphorylase/phosphoribosyltransferase N-terminal domain"/>
    <property type="match status" value="1"/>
</dbReference>
<accession>Q5LYI4</accession>
<sequence>MKEIFLQISNRQDLSQDQVQAVFDRILKNEVSESQIASFLMGLKIKGETSDEITGIVRALKSHATVLPETFTDAMCNCGTGGDQSYSFNISTTACFVLAAGGIRMAKAGNRSISSKSGSADVLEVLGINVAASPEILSKALDEVGLAFIFAQTMHPAMRFIGPARQALGIPTIMNLVGPLANPLDLETQLMGLYRVELQEIVANTIQQLGRKRAVIITGPDNMDEAALYGTNTYTLLEDGHISQHTFTYEDLGMEKVELSDITGGDAKENAEILLSVLRNEASPYLETTVLNVGLGFFANGKAGTIKEGVELARQLIADGSALEKLRKLQEVQV</sequence>
<protein>
    <recommendedName>
        <fullName evidence="1">Anthranilate phosphoribosyltransferase</fullName>
        <ecNumber evidence="1">2.4.2.18</ecNumber>
    </recommendedName>
</protein>
<evidence type="ECO:0000255" key="1">
    <source>
        <dbReference type="HAMAP-Rule" id="MF_00211"/>
    </source>
</evidence>
<gene>
    <name evidence="1" type="primary">trpD</name>
    <name type="ordered locus">str1591</name>
</gene>
<reference key="1">
    <citation type="journal article" date="2004" name="Nat. Biotechnol.">
        <title>Complete sequence and comparative genome analysis of the dairy bacterium Streptococcus thermophilus.</title>
        <authorList>
            <person name="Bolotin A."/>
            <person name="Quinquis B."/>
            <person name="Renault P."/>
            <person name="Sorokin A."/>
            <person name="Ehrlich S.D."/>
            <person name="Kulakauskas S."/>
            <person name="Lapidus A."/>
            <person name="Goltsman E."/>
            <person name="Mazur M."/>
            <person name="Pusch G.D."/>
            <person name="Fonstein M."/>
            <person name="Overbeek R."/>
            <person name="Kyprides N."/>
            <person name="Purnelle B."/>
            <person name="Prozzi D."/>
            <person name="Ngui K."/>
            <person name="Masuy D."/>
            <person name="Hancy F."/>
            <person name="Burteau S."/>
            <person name="Boutry M."/>
            <person name="Delcour J."/>
            <person name="Goffeau A."/>
            <person name="Hols P."/>
        </authorList>
    </citation>
    <scope>NUCLEOTIDE SEQUENCE [LARGE SCALE GENOMIC DNA]</scope>
    <source>
        <strain>CNRZ 1066</strain>
    </source>
</reference>
<keyword id="KW-0028">Amino-acid biosynthesis</keyword>
<keyword id="KW-0057">Aromatic amino acid biosynthesis</keyword>
<keyword id="KW-0328">Glycosyltransferase</keyword>
<keyword id="KW-0460">Magnesium</keyword>
<keyword id="KW-0479">Metal-binding</keyword>
<keyword id="KW-0808">Transferase</keyword>
<keyword id="KW-0822">Tryptophan biosynthesis</keyword>
<organism>
    <name type="scientific">Streptococcus thermophilus (strain CNRZ 1066)</name>
    <dbReference type="NCBI Taxonomy" id="299768"/>
    <lineage>
        <taxon>Bacteria</taxon>
        <taxon>Bacillati</taxon>
        <taxon>Bacillota</taxon>
        <taxon>Bacilli</taxon>
        <taxon>Lactobacillales</taxon>
        <taxon>Streptococcaceae</taxon>
        <taxon>Streptococcus</taxon>
    </lineage>
</organism>
<comment type="function">
    <text evidence="1">Catalyzes the transfer of the phosphoribosyl group of 5-phosphorylribose-1-pyrophosphate (PRPP) to anthranilate to yield N-(5'-phosphoribosyl)-anthranilate (PRA).</text>
</comment>
<comment type="catalytic activity">
    <reaction evidence="1">
        <text>N-(5-phospho-beta-D-ribosyl)anthranilate + diphosphate = 5-phospho-alpha-D-ribose 1-diphosphate + anthranilate</text>
        <dbReference type="Rhea" id="RHEA:11768"/>
        <dbReference type="ChEBI" id="CHEBI:16567"/>
        <dbReference type="ChEBI" id="CHEBI:18277"/>
        <dbReference type="ChEBI" id="CHEBI:33019"/>
        <dbReference type="ChEBI" id="CHEBI:58017"/>
        <dbReference type="EC" id="2.4.2.18"/>
    </reaction>
</comment>
<comment type="cofactor">
    <cofactor evidence="1">
        <name>Mg(2+)</name>
        <dbReference type="ChEBI" id="CHEBI:18420"/>
    </cofactor>
    <text evidence="1">Binds 2 magnesium ions per monomer.</text>
</comment>
<comment type="pathway">
    <text evidence="1">Amino-acid biosynthesis; L-tryptophan biosynthesis; L-tryptophan from chorismate: step 2/5.</text>
</comment>
<comment type="subunit">
    <text evidence="1">Homodimer.</text>
</comment>
<comment type="similarity">
    <text evidence="1">Belongs to the anthranilate phosphoribosyltransferase family.</text>
</comment>
<proteinExistence type="inferred from homology"/>
<feature type="chain" id="PRO_0000227191" description="Anthranilate phosphoribosyltransferase">
    <location>
        <begin position="1"/>
        <end position="334"/>
    </location>
</feature>
<feature type="binding site" evidence="1">
    <location>
        <position position="79"/>
    </location>
    <ligand>
        <name>5-phospho-alpha-D-ribose 1-diphosphate</name>
        <dbReference type="ChEBI" id="CHEBI:58017"/>
    </ligand>
</feature>
<feature type="binding site" evidence="1">
    <location>
        <position position="79"/>
    </location>
    <ligand>
        <name>anthranilate</name>
        <dbReference type="ChEBI" id="CHEBI:16567"/>
        <label>1</label>
    </ligand>
</feature>
<feature type="binding site" evidence="1">
    <location>
        <begin position="82"/>
        <end position="83"/>
    </location>
    <ligand>
        <name>5-phospho-alpha-D-ribose 1-diphosphate</name>
        <dbReference type="ChEBI" id="CHEBI:58017"/>
    </ligand>
</feature>
<feature type="binding site" evidence="1">
    <location>
        <position position="87"/>
    </location>
    <ligand>
        <name>5-phospho-alpha-D-ribose 1-diphosphate</name>
        <dbReference type="ChEBI" id="CHEBI:58017"/>
    </ligand>
</feature>
<feature type="binding site" evidence="1">
    <location>
        <begin position="89"/>
        <end position="92"/>
    </location>
    <ligand>
        <name>5-phospho-alpha-D-ribose 1-diphosphate</name>
        <dbReference type="ChEBI" id="CHEBI:58017"/>
    </ligand>
</feature>
<feature type="binding site" evidence="1">
    <location>
        <position position="91"/>
    </location>
    <ligand>
        <name>Mg(2+)</name>
        <dbReference type="ChEBI" id="CHEBI:18420"/>
        <label>1</label>
    </ligand>
</feature>
<feature type="binding site" evidence="1">
    <location>
        <begin position="107"/>
        <end position="115"/>
    </location>
    <ligand>
        <name>5-phospho-alpha-D-ribose 1-diphosphate</name>
        <dbReference type="ChEBI" id="CHEBI:58017"/>
    </ligand>
</feature>
<feature type="binding site" evidence="1">
    <location>
        <position position="110"/>
    </location>
    <ligand>
        <name>anthranilate</name>
        <dbReference type="ChEBI" id="CHEBI:16567"/>
        <label>1</label>
    </ligand>
</feature>
<feature type="binding site" evidence="1">
    <location>
        <position position="119"/>
    </location>
    <ligand>
        <name>5-phospho-alpha-D-ribose 1-diphosphate</name>
        <dbReference type="ChEBI" id="CHEBI:58017"/>
    </ligand>
</feature>
<feature type="binding site" evidence="1">
    <location>
        <position position="165"/>
    </location>
    <ligand>
        <name>anthranilate</name>
        <dbReference type="ChEBI" id="CHEBI:16567"/>
        <label>2</label>
    </ligand>
</feature>
<feature type="binding site" evidence="1">
    <location>
        <position position="224"/>
    </location>
    <ligand>
        <name>Mg(2+)</name>
        <dbReference type="ChEBI" id="CHEBI:18420"/>
        <label>2</label>
    </ligand>
</feature>
<feature type="binding site" evidence="1">
    <location>
        <position position="225"/>
    </location>
    <ligand>
        <name>Mg(2+)</name>
        <dbReference type="ChEBI" id="CHEBI:18420"/>
        <label>1</label>
    </ligand>
</feature>
<feature type="binding site" evidence="1">
    <location>
        <position position="225"/>
    </location>
    <ligand>
        <name>Mg(2+)</name>
        <dbReference type="ChEBI" id="CHEBI:18420"/>
        <label>2</label>
    </ligand>
</feature>
<name>TRPD_STRT1</name>